<proteinExistence type="inferred from homology"/>
<dbReference type="EC" id="1.1.1.86" evidence="1"/>
<dbReference type="EMBL" id="CP001389">
    <property type="protein sequence ID" value="ACP25739.1"/>
    <property type="molecule type" value="Genomic_DNA"/>
</dbReference>
<dbReference type="RefSeq" id="WP_012708503.1">
    <property type="nucleotide sequence ID" value="NC_012587.1"/>
</dbReference>
<dbReference type="RefSeq" id="YP_002826492.1">
    <property type="nucleotide sequence ID" value="NC_012587.1"/>
</dbReference>
<dbReference type="SMR" id="C3ME70"/>
<dbReference type="STRING" id="394.NGR_c19760"/>
<dbReference type="KEGG" id="rhi:NGR_c19760"/>
<dbReference type="PATRIC" id="fig|394.7.peg.4798"/>
<dbReference type="eggNOG" id="COG0059">
    <property type="taxonomic scope" value="Bacteria"/>
</dbReference>
<dbReference type="HOGENOM" id="CLU_033821_0_1_5"/>
<dbReference type="OrthoDB" id="9804088at2"/>
<dbReference type="UniPathway" id="UPA00047">
    <property type="reaction ID" value="UER00056"/>
</dbReference>
<dbReference type="UniPathway" id="UPA00049">
    <property type="reaction ID" value="UER00060"/>
</dbReference>
<dbReference type="Proteomes" id="UP000001054">
    <property type="component" value="Chromosome"/>
</dbReference>
<dbReference type="GO" id="GO:0005829">
    <property type="term" value="C:cytosol"/>
    <property type="evidence" value="ECO:0007669"/>
    <property type="project" value="TreeGrafter"/>
</dbReference>
<dbReference type="GO" id="GO:0004455">
    <property type="term" value="F:ketol-acid reductoisomerase activity"/>
    <property type="evidence" value="ECO:0007669"/>
    <property type="project" value="UniProtKB-UniRule"/>
</dbReference>
<dbReference type="GO" id="GO:0000287">
    <property type="term" value="F:magnesium ion binding"/>
    <property type="evidence" value="ECO:0007669"/>
    <property type="project" value="UniProtKB-UniRule"/>
</dbReference>
<dbReference type="GO" id="GO:0050661">
    <property type="term" value="F:NADP binding"/>
    <property type="evidence" value="ECO:0007669"/>
    <property type="project" value="InterPro"/>
</dbReference>
<dbReference type="GO" id="GO:0009097">
    <property type="term" value="P:isoleucine biosynthetic process"/>
    <property type="evidence" value="ECO:0007669"/>
    <property type="project" value="UniProtKB-UniRule"/>
</dbReference>
<dbReference type="GO" id="GO:0009099">
    <property type="term" value="P:L-valine biosynthetic process"/>
    <property type="evidence" value="ECO:0007669"/>
    <property type="project" value="UniProtKB-UniRule"/>
</dbReference>
<dbReference type="FunFam" id="3.40.50.720:FF:000023">
    <property type="entry name" value="Ketol-acid reductoisomerase (NADP(+))"/>
    <property type="match status" value="1"/>
</dbReference>
<dbReference type="Gene3D" id="6.10.240.10">
    <property type="match status" value="1"/>
</dbReference>
<dbReference type="Gene3D" id="3.40.50.720">
    <property type="entry name" value="NAD(P)-binding Rossmann-like Domain"/>
    <property type="match status" value="1"/>
</dbReference>
<dbReference type="HAMAP" id="MF_00435">
    <property type="entry name" value="IlvC"/>
    <property type="match status" value="1"/>
</dbReference>
<dbReference type="InterPro" id="IPR008927">
    <property type="entry name" value="6-PGluconate_DH-like_C_sf"/>
</dbReference>
<dbReference type="InterPro" id="IPR013023">
    <property type="entry name" value="KARI"/>
</dbReference>
<dbReference type="InterPro" id="IPR000506">
    <property type="entry name" value="KARI_C"/>
</dbReference>
<dbReference type="InterPro" id="IPR013116">
    <property type="entry name" value="KARI_N"/>
</dbReference>
<dbReference type="InterPro" id="IPR014359">
    <property type="entry name" value="KARI_prok"/>
</dbReference>
<dbReference type="InterPro" id="IPR036291">
    <property type="entry name" value="NAD(P)-bd_dom_sf"/>
</dbReference>
<dbReference type="NCBIfam" id="TIGR00465">
    <property type="entry name" value="ilvC"/>
    <property type="match status" value="1"/>
</dbReference>
<dbReference type="NCBIfam" id="NF004017">
    <property type="entry name" value="PRK05479.1"/>
    <property type="match status" value="1"/>
</dbReference>
<dbReference type="NCBIfam" id="NF009940">
    <property type="entry name" value="PRK13403.1"/>
    <property type="match status" value="1"/>
</dbReference>
<dbReference type="PANTHER" id="PTHR21371">
    <property type="entry name" value="KETOL-ACID REDUCTOISOMERASE, MITOCHONDRIAL"/>
    <property type="match status" value="1"/>
</dbReference>
<dbReference type="PANTHER" id="PTHR21371:SF1">
    <property type="entry name" value="KETOL-ACID REDUCTOISOMERASE, MITOCHONDRIAL"/>
    <property type="match status" value="1"/>
</dbReference>
<dbReference type="Pfam" id="PF01450">
    <property type="entry name" value="KARI_C"/>
    <property type="match status" value="1"/>
</dbReference>
<dbReference type="Pfam" id="PF07991">
    <property type="entry name" value="KARI_N"/>
    <property type="match status" value="1"/>
</dbReference>
<dbReference type="PIRSF" id="PIRSF000116">
    <property type="entry name" value="IlvC_gammaproteo"/>
    <property type="match status" value="1"/>
</dbReference>
<dbReference type="SUPFAM" id="SSF48179">
    <property type="entry name" value="6-phosphogluconate dehydrogenase C-terminal domain-like"/>
    <property type="match status" value="1"/>
</dbReference>
<dbReference type="SUPFAM" id="SSF51735">
    <property type="entry name" value="NAD(P)-binding Rossmann-fold domains"/>
    <property type="match status" value="1"/>
</dbReference>
<dbReference type="PROSITE" id="PS51851">
    <property type="entry name" value="KARI_C"/>
    <property type="match status" value="1"/>
</dbReference>
<dbReference type="PROSITE" id="PS51850">
    <property type="entry name" value="KARI_N"/>
    <property type="match status" value="1"/>
</dbReference>
<comment type="function">
    <text evidence="1">Involved in the biosynthesis of branched-chain amino acids (BCAA). Catalyzes an alkyl-migration followed by a ketol-acid reduction of (S)-2-acetolactate (S2AL) to yield (R)-2,3-dihydroxy-isovalerate. In the isomerase reaction, S2AL is rearranged via a Mg-dependent methyl migration to produce 3-hydroxy-3-methyl-2-ketobutyrate (HMKB). In the reductase reaction, this 2-ketoacid undergoes a metal-dependent reduction by NADPH to yield (R)-2,3-dihydroxy-isovalerate.</text>
</comment>
<comment type="catalytic activity">
    <reaction evidence="1">
        <text>(2R)-2,3-dihydroxy-3-methylbutanoate + NADP(+) = (2S)-2-acetolactate + NADPH + H(+)</text>
        <dbReference type="Rhea" id="RHEA:22068"/>
        <dbReference type="ChEBI" id="CHEBI:15378"/>
        <dbReference type="ChEBI" id="CHEBI:49072"/>
        <dbReference type="ChEBI" id="CHEBI:57783"/>
        <dbReference type="ChEBI" id="CHEBI:58349"/>
        <dbReference type="ChEBI" id="CHEBI:58476"/>
        <dbReference type="EC" id="1.1.1.86"/>
    </reaction>
</comment>
<comment type="catalytic activity">
    <reaction evidence="1">
        <text>(2R,3R)-2,3-dihydroxy-3-methylpentanoate + NADP(+) = (S)-2-ethyl-2-hydroxy-3-oxobutanoate + NADPH + H(+)</text>
        <dbReference type="Rhea" id="RHEA:13493"/>
        <dbReference type="ChEBI" id="CHEBI:15378"/>
        <dbReference type="ChEBI" id="CHEBI:49256"/>
        <dbReference type="ChEBI" id="CHEBI:49258"/>
        <dbReference type="ChEBI" id="CHEBI:57783"/>
        <dbReference type="ChEBI" id="CHEBI:58349"/>
        <dbReference type="EC" id="1.1.1.86"/>
    </reaction>
</comment>
<comment type="cofactor">
    <cofactor evidence="1">
        <name>Mg(2+)</name>
        <dbReference type="ChEBI" id="CHEBI:18420"/>
    </cofactor>
    <text evidence="1">Binds 2 magnesium ions per subunit.</text>
</comment>
<comment type="pathway">
    <text evidence="1">Amino-acid biosynthesis; L-isoleucine biosynthesis; L-isoleucine from 2-oxobutanoate: step 2/4.</text>
</comment>
<comment type="pathway">
    <text evidence="1">Amino-acid biosynthesis; L-valine biosynthesis; L-valine from pyruvate: step 2/4.</text>
</comment>
<comment type="similarity">
    <text evidence="1">Belongs to the ketol-acid reductoisomerase family.</text>
</comment>
<name>ILVC_SINFN</name>
<protein>
    <recommendedName>
        <fullName evidence="1">Ketol-acid reductoisomerase (NADP(+))</fullName>
        <shortName evidence="1">KARI</shortName>
        <ecNumber evidence="1">1.1.1.86</ecNumber>
    </recommendedName>
    <alternativeName>
        <fullName evidence="1">Acetohydroxy-acid isomeroreductase</fullName>
        <shortName evidence="1">AHIR</shortName>
    </alternativeName>
    <alternativeName>
        <fullName evidence="1">Alpha-keto-beta-hydroxylacyl reductoisomerase</fullName>
    </alternativeName>
    <alternativeName>
        <fullName evidence="1">Ketol-acid reductoisomerase type 1</fullName>
    </alternativeName>
    <alternativeName>
        <fullName evidence="1">Ketol-acid reductoisomerase type I</fullName>
    </alternativeName>
</protein>
<evidence type="ECO:0000255" key="1">
    <source>
        <dbReference type="HAMAP-Rule" id="MF_00435"/>
    </source>
</evidence>
<evidence type="ECO:0000255" key="2">
    <source>
        <dbReference type="PROSITE-ProRule" id="PRU01197"/>
    </source>
</evidence>
<evidence type="ECO:0000255" key="3">
    <source>
        <dbReference type="PROSITE-ProRule" id="PRU01198"/>
    </source>
</evidence>
<keyword id="KW-0028">Amino-acid biosynthesis</keyword>
<keyword id="KW-0100">Branched-chain amino acid biosynthesis</keyword>
<keyword id="KW-0460">Magnesium</keyword>
<keyword id="KW-0479">Metal-binding</keyword>
<keyword id="KW-0521">NADP</keyword>
<keyword id="KW-0560">Oxidoreductase</keyword>
<keyword id="KW-1185">Reference proteome</keyword>
<organism>
    <name type="scientific">Sinorhizobium fredii (strain NBRC 101917 / NGR234)</name>
    <dbReference type="NCBI Taxonomy" id="394"/>
    <lineage>
        <taxon>Bacteria</taxon>
        <taxon>Pseudomonadati</taxon>
        <taxon>Pseudomonadota</taxon>
        <taxon>Alphaproteobacteria</taxon>
        <taxon>Hyphomicrobiales</taxon>
        <taxon>Rhizobiaceae</taxon>
        <taxon>Sinorhizobium/Ensifer group</taxon>
        <taxon>Sinorhizobium</taxon>
    </lineage>
</organism>
<reference key="1">
    <citation type="journal article" date="2009" name="Appl. Environ. Microbiol.">
        <title>Rhizobium sp. strain NGR234 possesses a remarkable number of secretion systems.</title>
        <authorList>
            <person name="Schmeisser C."/>
            <person name="Liesegang H."/>
            <person name="Krysciak D."/>
            <person name="Bakkou N."/>
            <person name="Le Quere A."/>
            <person name="Wollherr A."/>
            <person name="Heinemeyer I."/>
            <person name="Morgenstern B."/>
            <person name="Pommerening-Roeser A."/>
            <person name="Flores M."/>
            <person name="Palacios R."/>
            <person name="Brenner S."/>
            <person name="Gottschalk G."/>
            <person name="Schmitz R.A."/>
            <person name="Broughton W.J."/>
            <person name="Perret X."/>
            <person name="Strittmatter A.W."/>
            <person name="Streit W.R."/>
        </authorList>
    </citation>
    <scope>NUCLEOTIDE SEQUENCE [LARGE SCALE GENOMIC DNA]</scope>
    <source>
        <strain>NBRC 101917 / NGR234</strain>
    </source>
</reference>
<sequence>MRVYYDRDADLNLIKSKKVAIIGYGSQGRAHALNLKDSGAQNVAIALKSGSATAKKAEADGFKVMTVAEAAAWADLMMMATPDELQADIYKAEIAGNIRDGAAIAFAHGLNVHFGLIEPKASVDVVMIAPKGPGHTVRGEYQKGGGVPCLVAVHQNASGNALDLALSYACGVGGGRSGIIETNFKEECETDLFGEQVVLCGGLVELIRAGFETLVEAGYAPEMAYFECLHEVKLIVDLIYEGGIANMNYSISNTAEWGEYVTGPRIITDETKAEMKRVLKDIQTGKFTSEWMQEYRSGAARFKGIRRVNDAHQIEEVGAKLRGMMPWIGKNKLVDKAKN</sequence>
<gene>
    <name evidence="1" type="primary">ilvC</name>
    <name type="ordered locus">NGR_c19760</name>
</gene>
<feature type="chain" id="PRO_1000190980" description="Ketol-acid reductoisomerase (NADP(+))">
    <location>
        <begin position="1"/>
        <end position="339"/>
    </location>
</feature>
<feature type="domain" description="KARI N-terminal Rossmann" evidence="2">
    <location>
        <begin position="1"/>
        <end position="182"/>
    </location>
</feature>
<feature type="domain" description="KARI C-terminal knotted" evidence="3">
    <location>
        <begin position="183"/>
        <end position="328"/>
    </location>
</feature>
<feature type="active site" evidence="1">
    <location>
        <position position="108"/>
    </location>
</feature>
<feature type="binding site" evidence="1">
    <location>
        <begin position="24"/>
        <end position="27"/>
    </location>
    <ligand>
        <name>NADP(+)</name>
        <dbReference type="ChEBI" id="CHEBI:58349"/>
    </ligand>
</feature>
<feature type="binding site" evidence="1">
    <location>
        <position position="48"/>
    </location>
    <ligand>
        <name>NADP(+)</name>
        <dbReference type="ChEBI" id="CHEBI:58349"/>
    </ligand>
</feature>
<feature type="binding site" evidence="1">
    <location>
        <position position="51"/>
    </location>
    <ligand>
        <name>NADP(+)</name>
        <dbReference type="ChEBI" id="CHEBI:58349"/>
    </ligand>
</feature>
<feature type="binding site" evidence="1">
    <location>
        <position position="53"/>
    </location>
    <ligand>
        <name>NADP(+)</name>
        <dbReference type="ChEBI" id="CHEBI:58349"/>
    </ligand>
</feature>
<feature type="binding site" evidence="1">
    <location>
        <begin position="83"/>
        <end position="86"/>
    </location>
    <ligand>
        <name>NADP(+)</name>
        <dbReference type="ChEBI" id="CHEBI:58349"/>
    </ligand>
</feature>
<feature type="binding site" evidence="1">
    <location>
        <position position="134"/>
    </location>
    <ligand>
        <name>NADP(+)</name>
        <dbReference type="ChEBI" id="CHEBI:58349"/>
    </ligand>
</feature>
<feature type="binding site" evidence="1">
    <location>
        <position position="191"/>
    </location>
    <ligand>
        <name>Mg(2+)</name>
        <dbReference type="ChEBI" id="CHEBI:18420"/>
        <label>1</label>
    </ligand>
</feature>
<feature type="binding site" evidence="1">
    <location>
        <position position="191"/>
    </location>
    <ligand>
        <name>Mg(2+)</name>
        <dbReference type="ChEBI" id="CHEBI:18420"/>
        <label>2</label>
    </ligand>
</feature>
<feature type="binding site" evidence="1">
    <location>
        <position position="195"/>
    </location>
    <ligand>
        <name>Mg(2+)</name>
        <dbReference type="ChEBI" id="CHEBI:18420"/>
        <label>1</label>
    </ligand>
</feature>
<feature type="binding site" evidence="1">
    <location>
        <position position="227"/>
    </location>
    <ligand>
        <name>Mg(2+)</name>
        <dbReference type="ChEBI" id="CHEBI:18420"/>
        <label>2</label>
    </ligand>
</feature>
<feature type="binding site" evidence="1">
    <location>
        <position position="231"/>
    </location>
    <ligand>
        <name>Mg(2+)</name>
        <dbReference type="ChEBI" id="CHEBI:18420"/>
        <label>2</label>
    </ligand>
</feature>
<feature type="binding site" evidence="1">
    <location>
        <position position="252"/>
    </location>
    <ligand>
        <name>substrate</name>
    </ligand>
</feature>
<accession>C3ME70</accession>